<reference key="1">
    <citation type="journal article" date="2002" name="Nucleic Acids Res.">
        <title>Genome sequence of Shigella flexneri 2a: insights into pathogenicity through comparison with genomes of Escherichia coli K12 and O157.</title>
        <authorList>
            <person name="Jin Q."/>
            <person name="Yuan Z."/>
            <person name="Xu J."/>
            <person name="Wang Y."/>
            <person name="Shen Y."/>
            <person name="Lu W."/>
            <person name="Wang J."/>
            <person name="Liu H."/>
            <person name="Yang J."/>
            <person name="Yang F."/>
            <person name="Zhang X."/>
            <person name="Zhang J."/>
            <person name="Yang G."/>
            <person name="Wu H."/>
            <person name="Qu D."/>
            <person name="Dong J."/>
            <person name="Sun L."/>
            <person name="Xue Y."/>
            <person name="Zhao A."/>
            <person name="Gao Y."/>
            <person name="Zhu J."/>
            <person name="Kan B."/>
            <person name="Ding K."/>
            <person name="Chen S."/>
            <person name="Cheng H."/>
            <person name="Yao Z."/>
            <person name="He B."/>
            <person name="Chen R."/>
            <person name="Ma D."/>
            <person name="Qiang B."/>
            <person name="Wen Y."/>
            <person name="Hou Y."/>
            <person name="Yu J."/>
        </authorList>
    </citation>
    <scope>NUCLEOTIDE SEQUENCE [LARGE SCALE GENOMIC DNA]</scope>
    <source>
        <strain>301 / Serotype 2a</strain>
    </source>
</reference>
<reference key="2">
    <citation type="journal article" date="2003" name="Infect. Immun.">
        <title>Complete genome sequence and comparative genomics of Shigella flexneri serotype 2a strain 2457T.</title>
        <authorList>
            <person name="Wei J."/>
            <person name="Goldberg M.B."/>
            <person name="Burland V."/>
            <person name="Venkatesan M.M."/>
            <person name="Deng W."/>
            <person name="Fournier G."/>
            <person name="Mayhew G.F."/>
            <person name="Plunkett G. III"/>
            <person name="Rose D.J."/>
            <person name="Darling A."/>
            <person name="Mau B."/>
            <person name="Perna N.T."/>
            <person name="Payne S.M."/>
            <person name="Runyen-Janecky L.J."/>
            <person name="Zhou S."/>
            <person name="Schwartz D.C."/>
            <person name="Blattner F.R."/>
        </authorList>
    </citation>
    <scope>NUCLEOTIDE SEQUENCE [LARGE SCALE GENOMIC DNA]</scope>
    <source>
        <strain>ATCC 700930 / 2457T / Serotype 2a</strain>
    </source>
</reference>
<reference key="3">
    <citation type="journal article" date="2001" name="Biochem. Biophys. Res. Commun.">
        <title>Influence of the yihE gene of Shigella flexneri on global gene expression: on analysis using DNA arrays.</title>
        <authorList>
            <person name="Li M.-S."/>
            <person name="Kroll J.S."/>
            <person name="Yu J."/>
        </authorList>
    </citation>
    <scope>FUNCTION</scope>
    <scope>INDUCTION</scope>
    <source>
        <strain>M90T / Serotype 5a</strain>
    </source>
</reference>
<reference key="4">
    <citation type="journal article" date="2004" name="Microbiology">
        <title>The role of the Shigella flexneri yihE gene in LPS synthesis and virulence.</title>
        <authorList>
            <person name="Edwards-Jones B."/>
            <person name="Langford P.R."/>
            <person name="Kroll J.S."/>
            <person name="Yu J."/>
        </authorList>
    </citation>
    <scope>FUNCTION</scope>
    <source>
        <strain>M90T / Serotype 5a</strain>
    </source>
</reference>
<feature type="chain" id="PRO_0000209581" description="Stress response kinase A">
    <location>
        <begin position="1"/>
        <end position="328"/>
    </location>
</feature>
<feature type="active site" description="Proton acceptor" evidence="1">
    <location>
        <position position="201"/>
    </location>
</feature>
<feature type="active site" evidence="1">
    <location>
        <position position="217"/>
    </location>
</feature>
<feature type="binding site" evidence="1">
    <location>
        <position position="206"/>
    </location>
    <ligand>
        <name>Mg(2+)</name>
        <dbReference type="ChEBI" id="CHEBI:18420"/>
    </ligand>
</feature>
<feature type="binding site" evidence="1">
    <location>
        <position position="217"/>
    </location>
    <ligand>
        <name>Mg(2+)</name>
        <dbReference type="ChEBI" id="CHEBI:18420"/>
    </ligand>
</feature>
<feature type="site" description="ATP" evidence="1">
    <location>
        <position position="36"/>
    </location>
</feature>
<protein>
    <recommendedName>
        <fullName evidence="1">Stress response kinase A</fullName>
        <ecNumber evidence="1">2.7.11.1</ecNumber>
    </recommendedName>
    <alternativeName>
        <fullName evidence="1">Serine/threonine-protein kinase SrkA</fullName>
    </alternativeName>
</protein>
<organism>
    <name type="scientific">Shigella flexneri</name>
    <dbReference type="NCBI Taxonomy" id="623"/>
    <lineage>
        <taxon>Bacteria</taxon>
        <taxon>Pseudomonadati</taxon>
        <taxon>Pseudomonadota</taxon>
        <taxon>Gammaproteobacteria</taxon>
        <taxon>Enterobacterales</taxon>
        <taxon>Enterobacteriaceae</taxon>
        <taxon>Shigella</taxon>
    </lineage>
</organism>
<keyword id="KW-0067">ATP-binding</keyword>
<keyword id="KW-0963">Cytoplasm</keyword>
<keyword id="KW-0418">Kinase</keyword>
<keyword id="KW-0460">Magnesium</keyword>
<keyword id="KW-0479">Metal-binding</keyword>
<keyword id="KW-0547">Nucleotide-binding</keyword>
<keyword id="KW-0597">Phosphoprotein</keyword>
<keyword id="KW-1185">Reference proteome</keyword>
<keyword id="KW-0723">Serine/threonine-protein kinase</keyword>
<keyword id="KW-0346">Stress response</keyword>
<keyword id="KW-0808">Transferase</keyword>
<sequence length="328" mass="38118">MNNSAFTFQTLHPDTIMDALFKQGIRVDSGLTPLNSYENRVYQFQDEERRRFVVKFYRPERWTADQILEEHQFALQLVNDEVPVAAPVAFNGQTLLNHQGFYFAVFPSVGGRQFEADNIDQMEAVGRYLGRMHQTGRKQLFIHRPTIGLNEYLIEPRKLFEDATLIPSGLKAAFLKATDELIAAVTAHWREDFTVLRLHGDCHAGNILWRDGPMFVDLDDARNGPAIQDLWMLLNGDKAQQRMQLETIIEAYEEFSEFDTAEIGLIEPLRAMRLVYYLAWLMRHWADPAFPKNFPWLTGEDYWLRQTATFIEQAKVLQEPPLQLTPMY</sequence>
<dbReference type="EC" id="2.7.11.1" evidence="1"/>
<dbReference type="EMBL" id="AE005674">
    <property type="protein sequence ID" value="AAN45365.1"/>
    <property type="molecule type" value="Genomic_DNA"/>
</dbReference>
<dbReference type="EMBL" id="AE014073">
    <property type="protein sequence ID" value="AAP18833.1"/>
    <property type="molecule type" value="Genomic_DNA"/>
</dbReference>
<dbReference type="RefSeq" id="NP_709658.1">
    <property type="nucleotide sequence ID" value="NC_004337.2"/>
</dbReference>
<dbReference type="RefSeq" id="WP_001065539.1">
    <property type="nucleotide sequence ID" value="NZ_WPGW01000069.1"/>
</dbReference>
<dbReference type="SMR" id="Q83IV7"/>
<dbReference type="STRING" id="198214.SF3930"/>
<dbReference type="PaxDb" id="198214-SF3930"/>
<dbReference type="GeneID" id="1024218"/>
<dbReference type="KEGG" id="sfl:SF3930"/>
<dbReference type="KEGG" id="sfx:S3817"/>
<dbReference type="PATRIC" id="fig|198214.7.peg.4630"/>
<dbReference type="HOGENOM" id="CLU_054715_0_0_6"/>
<dbReference type="Proteomes" id="UP000001006">
    <property type="component" value="Chromosome"/>
</dbReference>
<dbReference type="Proteomes" id="UP000002673">
    <property type="component" value="Chromosome"/>
</dbReference>
<dbReference type="GO" id="GO:0005737">
    <property type="term" value="C:cytoplasm"/>
    <property type="evidence" value="ECO:0007669"/>
    <property type="project" value="UniProtKB-SubCell"/>
</dbReference>
<dbReference type="GO" id="GO:0005524">
    <property type="term" value="F:ATP binding"/>
    <property type="evidence" value="ECO:0007669"/>
    <property type="project" value="UniProtKB-UniRule"/>
</dbReference>
<dbReference type="GO" id="GO:0000287">
    <property type="term" value="F:magnesium ion binding"/>
    <property type="evidence" value="ECO:0007669"/>
    <property type="project" value="UniProtKB-UniRule"/>
</dbReference>
<dbReference type="GO" id="GO:0106310">
    <property type="term" value="F:protein serine kinase activity"/>
    <property type="evidence" value="ECO:0007669"/>
    <property type="project" value="RHEA"/>
</dbReference>
<dbReference type="GO" id="GO:0004674">
    <property type="term" value="F:protein serine/threonine kinase activity"/>
    <property type="evidence" value="ECO:0007669"/>
    <property type="project" value="UniProtKB-UniRule"/>
</dbReference>
<dbReference type="Gene3D" id="1.20.1270.170">
    <property type="match status" value="1"/>
</dbReference>
<dbReference type="Gene3D" id="3.30.200.70">
    <property type="match status" value="1"/>
</dbReference>
<dbReference type="Gene3D" id="1.10.510.10">
    <property type="entry name" value="Transferase(Phosphotransferase) domain 1"/>
    <property type="match status" value="1"/>
</dbReference>
<dbReference type="HAMAP" id="MF_01497">
    <property type="entry name" value="SrkA_kinase"/>
    <property type="match status" value="1"/>
</dbReference>
<dbReference type="InterPro" id="IPR002575">
    <property type="entry name" value="Aminoglycoside_PTrfase"/>
</dbReference>
<dbReference type="InterPro" id="IPR011009">
    <property type="entry name" value="Kinase-like_dom_sf"/>
</dbReference>
<dbReference type="InterPro" id="IPR032882">
    <property type="entry name" value="SrkA/RdoA"/>
</dbReference>
<dbReference type="NCBIfam" id="NF008738">
    <property type="entry name" value="PRK11768.1"/>
    <property type="match status" value="1"/>
</dbReference>
<dbReference type="PANTHER" id="PTHR39573">
    <property type="entry name" value="STRESS RESPONSE KINASE A"/>
    <property type="match status" value="1"/>
</dbReference>
<dbReference type="PANTHER" id="PTHR39573:SF1">
    <property type="entry name" value="STRESS RESPONSE KINASE A"/>
    <property type="match status" value="1"/>
</dbReference>
<dbReference type="Pfam" id="PF01636">
    <property type="entry name" value="APH"/>
    <property type="match status" value="1"/>
</dbReference>
<dbReference type="SUPFAM" id="SSF56112">
    <property type="entry name" value="Protein kinase-like (PK-like)"/>
    <property type="match status" value="1"/>
</dbReference>
<gene>
    <name evidence="1" type="primary">srkA</name>
    <name evidence="4" type="synonym">yihE</name>
    <name type="ordered locus">SF3930</name>
    <name type="ordered locus">S3817</name>
</gene>
<name>SRKA_SHIFL</name>
<proteinExistence type="evidence at transcript level"/>
<comment type="function">
    <text evidence="1 2 3">A protein kinase that phosphorylates Ser and Thr residues. Probably acts to suppress the effects of stress linked to accumulation of reactive oxygen species (By similarity). Probably involved in the extracytoplasmic stress response (PubMed:11594757). Also has a role in LPS synthesis, through regulation of the galETK expression (PubMed:15073317).</text>
</comment>
<comment type="function">
    <text evidence="1">A protein kinase that phosphorylates Ser and Thr residues. Probably acts to suppress the effects of stress linked to accumulation of reactive oxygen species. Probably involved in the extracytoplasmic stress response.</text>
</comment>
<comment type="catalytic activity">
    <reaction evidence="1">
        <text>L-seryl-[protein] + ATP = O-phospho-L-seryl-[protein] + ADP + H(+)</text>
        <dbReference type="Rhea" id="RHEA:17989"/>
        <dbReference type="Rhea" id="RHEA-COMP:9863"/>
        <dbReference type="Rhea" id="RHEA-COMP:11604"/>
        <dbReference type="ChEBI" id="CHEBI:15378"/>
        <dbReference type="ChEBI" id="CHEBI:29999"/>
        <dbReference type="ChEBI" id="CHEBI:30616"/>
        <dbReference type="ChEBI" id="CHEBI:83421"/>
        <dbReference type="ChEBI" id="CHEBI:456216"/>
        <dbReference type="EC" id="2.7.11.1"/>
    </reaction>
</comment>
<comment type="catalytic activity">
    <reaction evidence="1">
        <text>L-threonyl-[protein] + ATP = O-phospho-L-threonyl-[protein] + ADP + H(+)</text>
        <dbReference type="Rhea" id="RHEA:46608"/>
        <dbReference type="Rhea" id="RHEA-COMP:11060"/>
        <dbReference type="Rhea" id="RHEA-COMP:11605"/>
        <dbReference type="ChEBI" id="CHEBI:15378"/>
        <dbReference type="ChEBI" id="CHEBI:30013"/>
        <dbReference type="ChEBI" id="CHEBI:30616"/>
        <dbReference type="ChEBI" id="CHEBI:61977"/>
        <dbReference type="ChEBI" id="CHEBI:456216"/>
        <dbReference type="EC" id="2.7.11.1"/>
    </reaction>
</comment>
<comment type="cofactor">
    <cofactor evidence="1">
        <name>Mg(2+)</name>
        <dbReference type="ChEBI" id="CHEBI:18420"/>
    </cofactor>
</comment>
<comment type="subunit">
    <text evidence="1">Monomer.</text>
</comment>
<comment type="subcellular location">
    <subcellularLocation>
        <location evidence="1">Cytoplasm</location>
    </subcellularLocation>
</comment>
<comment type="induction">
    <text evidence="2">Expression is regulated by the CpxRA two-component regulatory system.</text>
</comment>
<comment type="similarity">
    <text evidence="1">Belongs to the SrkA/RdoA protein kinase family.</text>
</comment>
<evidence type="ECO:0000255" key="1">
    <source>
        <dbReference type="HAMAP-Rule" id="MF_01497"/>
    </source>
</evidence>
<evidence type="ECO:0000269" key="2">
    <source>
    </source>
</evidence>
<evidence type="ECO:0000269" key="3">
    <source>
    </source>
</evidence>
<evidence type="ECO:0000303" key="4">
    <source>
    </source>
</evidence>
<accession>Q83IV7</accession>
<accession>Q7BZD6</accession>